<reference key="1">
    <citation type="journal article" date="2004" name="Nature">
        <title>Genome sequence of the Brown Norway rat yields insights into mammalian evolution.</title>
        <authorList>
            <person name="Gibbs R.A."/>
            <person name="Weinstock G.M."/>
            <person name="Metzker M.L."/>
            <person name="Muzny D.M."/>
            <person name="Sodergren E.J."/>
            <person name="Scherer S."/>
            <person name="Scott G."/>
            <person name="Steffen D."/>
            <person name="Worley K.C."/>
            <person name="Burch P.E."/>
            <person name="Okwuonu G."/>
            <person name="Hines S."/>
            <person name="Lewis L."/>
            <person name="Deramo C."/>
            <person name="Delgado O."/>
            <person name="Dugan-Rocha S."/>
            <person name="Miner G."/>
            <person name="Morgan M."/>
            <person name="Hawes A."/>
            <person name="Gill R."/>
            <person name="Holt R.A."/>
            <person name="Adams M.D."/>
            <person name="Amanatides P.G."/>
            <person name="Baden-Tillson H."/>
            <person name="Barnstead M."/>
            <person name="Chin S."/>
            <person name="Evans C.A."/>
            <person name="Ferriera S."/>
            <person name="Fosler C."/>
            <person name="Glodek A."/>
            <person name="Gu Z."/>
            <person name="Jennings D."/>
            <person name="Kraft C.L."/>
            <person name="Nguyen T."/>
            <person name="Pfannkoch C.M."/>
            <person name="Sitter C."/>
            <person name="Sutton G.G."/>
            <person name="Venter J.C."/>
            <person name="Woodage T."/>
            <person name="Smith D."/>
            <person name="Lee H.-M."/>
            <person name="Gustafson E."/>
            <person name="Cahill P."/>
            <person name="Kana A."/>
            <person name="Doucette-Stamm L."/>
            <person name="Weinstock K."/>
            <person name="Fechtel K."/>
            <person name="Weiss R.B."/>
            <person name="Dunn D.M."/>
            <person name="Green E.D."/>
            <person name="Blakesley R.W."/>
            <person name="Bouffard G.G."/>
            <person name="De Jong P.J."/>
            <person name="Osoegawa K."/>
            <person name="Zhu B."/>
            <person name="Marra M."/>
            <person name="Schein J."/>
            <person name="Bosdet I."/>
            <person name="Fjell C."/>
            <person name="Jones S."/>
            <person name="Krzywinski M."/>
            <person name="Mathewson C."/>
            <person name="Siddiqui A."/>
            <person name="Wye N."/>
            <person name="McPherson J."/>
            <person name="Zhao S."/>
            <person name="Fraser C.M."/>
            <person name="Shetty J."/>
            <person name="Shatsman S."/>
            <person name="Geer K."/>
            <person name="Chen Y."/>
            <person name="Abramzon S."/>
            <person name="Nierman W.C."/>
            <person name="Havlak P.H."/>
            <person name="Chen R."/>
            <person name="Durbin K.J."/>
            <person name="Egan A."/>
            <person name="Ren Y."/>
            <person name="Song X.-Z."/>
            <person name="Li B."/>
            <person name="Liu Y."/>
            <person name="Qin X."/>
            <person name="Cawley S."/>
            <person name="Cooney A.J."/>
            <person name="D'Souza L.M."/>
            <person name="Martin K."/>
            <person name="Wu J.Q."/>
            <person name="Gonzalez-Garay M.L."/>
            <person name="Jackson A.R."/>
            <person name="Kalafus K.J."/>
            <person name="McLeod M.P."/>
            <person name="Milosavljevic A."/>
            <person name="Virk D."/>
            <person name="Volkov A."/>
            <person name="Wheeler D.A."/>
            <person name="Zhang Z."/>
            <person name="Bailey J.A."/>
            <person name="Eichler E.E."/>
            <person name="Tuzun E."/>
            <person name="Birney E."/>
            <person name="Mongin E."/>
            <person name="Ureta-Vidal A."/>
            <person name="Woodwark C."/>
            <person name="Zdobnov E."/>
            <person name="Bork P."/>
            <person name="Suyama M."/>
            <person name="Torrents D."/>
            <person name="Alexandersson M."/>
            <person name="Trask B.J."/>
            <person name="Young J.M."/>
            <person name="Huang H."/>
            <person name="Wang H."/>
            <person name="Xing H."/>
            <person name="Daniels S."/>
            <person name="Gietzen D."/>
            <person name="Schmidt J."/>
            <person name="Stevens K."/>
            <person name="Vitt U."/>
            <person name="Wingrove J."/>
            <person name="Camara F."/>
            <person name="Mar Alba M."/>
            <person name="Abril J.F."/>
            <person name="Guigo R."/>
            <person name="Smit A."/>
            <person name="Dubchak I."/>
            <person name="Rubin E.M."/>
            <person name="Couronne O."/>
            <person name="Poliakov A."/>
            <person name="Huebner N."/>
            <person name="Ganten D."/>
            <person name="Goesele C."/>
            <person name="Hummel O."/>
            <person name="Kreitler T."/>
            <person name="Lee Y.-A."/>
            <person name="Monti J."/>
            <person name="Schulz H."/>
            <person name="Zimdahl H."/>
            <person name="Himmelbauer H."/>
            <person name="Lehrach H."/>
            <person name="Jacob H.J."/>
            <person name="Bromberg S."/>
            <person name="Gullings-Handley J."/>
            <person name="Jensen-Seaman M.I."/>
            <person name="Kwitek A.E."/>
            <person name="Lazar J."/>
            <person name="Pasko D."/>
            <person name="Tonellato P.J."/>
            <person name="Twigger S."/>
            <person name="Ponting C.P."/>
            <person name="Duarte J.M."/>
            <person name="Rice S."/>
            <person name="Goodstadt L."/>
            <person name="Beatson S.A."/>
            <person name="Emes R.D."/>
            <person name="Winter E.E."/>
            <person name="Webber C."/>
            <person name="Brandt P."/>
            <person name="Nyakatura G."/>
            <person name="Adetobi M."/>
            <person name="Chiaromonte F."/>
            <person name="Elnitski L."/>
            <person name="Eswara P."/>
            <person name="Hardison R.C."/>
            <person name="Hou M."/>
            <person name="Kolbe D."/>
            <person name="Makova K."/>
            <person name="Miller W."/>
            <person name="Nekrutenko A."/>
            <person name="Riemer C."/>
            <person name="Schwartz S."/>
            <person name="Taylor J."/>
            <person name="Yang S."/>
            <person name="Zhang Y."/>
            <person name="Lindpaintner K."/>
            <person name="Andrews T.D."/>
            <person name="Caccamo M."/>
            <person name="Clamp M."/>
            <person name="Clarke L."/>
            <person name="Curwen V."/>
            <person name="Durbin R.M."/>
            <person name="Eyras E."/>
            <person name="Searle S.M."/>
            <person name="Cooper G.M."/>
            <person name="Batzoglou S."/>
            <person name="Brudno M."/>
            <person name="Sidow A."/>
            <person name="Stone E.A."/>
            <person name="Payseur B.A."/>
            <person name="Bourque G."/>
            <person name="Lopez-Otin C."/>
            <person name="Puente X.S."/>
            <person name="Chakrabarti K."/>
            <person name="Chatterji S."/>
            <person name="Dewey C."/>
            <person name="Pachter L."/>
            <person name="Bray N."/>
            <person name="Yap V.B."/>
            <person name="Caspi A."/>
            <person name="Tesler G."/>
            <person name="Pevzner P.A."/>
            <person name="Haussler D."/>
            <person name="Roskin K.M."/>
            <person name="Baertsch R."/>
            <person name="Clawson H."/>
            <person name="Furey T.S."/>
            <person name="Hinrichs A.S."/>
            <person name="Karolchik D."/>
            <person name="Kent W.J."/>
            <person name="Rosenbloom K.R."/>
            <person name="Trumbower H."/>
            <person name="Weirauch M."/>
            <person name="Cooper D.N."/>
            <person name="Stenson P.D."/>
            <person name="Ma B."/>
            <person name="Brent M."/>
            <person name="Arumugam M."/>
            <person name="Shteynberg D."/>
            <person name="Copley R.R."/>
            <person name="Taylor M.S."/>
            <person name="Riethman H."/>
            <person name="Mudunuri U."/>
            <person name="Peterson J."/>
            <person name="Guyer M."/>
            <person name="Felsenfeld A."/>
            <person name="Old S."/>
            <person name="Mockrin S."/>
            <person name="Collins F.S."/>
        </authorList>
    </citation>
    <scope>NUCLEOTIDE SEQUENCE [LARGE SCALE GENOMIC DNA]</scope>
    <source>
        <strain>Brown Norway</strain>
    </source>
</reference>
<reference key="2">
    <citation type="journal article" date="2004" name="Genome Res.">
        <title>The status, quality, and expansion of the NIH full-length cDNA project: the Mammalian Gene Collection (MGC).</title>
        <authorList>
            <consortium name="The MGC Project Team"/>
        </authorList>
    </citation>
    <scope>NUCLEOTIDE SEQUENCE [LARGE SCALE MRNA] OF 182-404</scope>
    <source>
        <tissue>Spleen</tissue>
    </source>
</reference>
<reference key="3">
    <citation type="journal article" date="2012" name="Nat. Commun.">
        <title>Quantitative maps of protein phosphorylation sites across 14 different rat organs and tissues.</title>
        <authorList>
            <person name="Lundby A."/>
            <person name="Secher A."/>
            <person name="Lage K."/>
            <person name="Nordsborg N.B."/>
            <person name="Dmytriyev A."/>
            <person name="Lundby C."/>
            <person name="Olsen J.V."/>
        </authorList>
    </citation>
    <scope>PHOSPHORYLATION [LARGE SCALE ANALYSIS] AT THR-293; SER-304; SER-358 AND SER-362</scope>
    <scope>IDENTIFICATION BY MASS SPECTROMETRY [LARGE SCALE ANALYSIS]</scope>
</reference>
<dbReference type="EMBL" id="AABR03055857">
    <property type="status" value="NOT_ANNOTATED_CDS"/>
    <property type="molecule type" value="Genomic_DNA"/>
</dbReference>
<dbReference type="EMBL" id="AABR03055498">
    <property type="status" value="NOT_ANNOTATED_CDS"/>
    <property type="molecule type" value="Genomic_DNA"/>
</dbReference>
<dbReference type="EMBL" id="BC098850">
    <property type="protein sequence ID" value="AAH98850.1"/>
    <property type="molecule type" value="mRNA"/>
</dbReference>
<dbReference type="RefSeq" id="NP_001257976.1">
    <property type="nucleotide sequence ID" value="NM_001271047.2"/>
</dbReference>
<dbReference type="FunCoup" id="Q4G008">
    <property type="interactions" value="694"/>
</dbReference>
<dbReference type="STRING" id="10116.ENSRNOP00000039129"/>
<dbReference type="GlyGen" id="Q4G008">
    <property type="glycosylation" value="1 site"/>
</dbReference>
<dbReference type="iPTMnet" id="Q4G008"/>
<dbReference type="PhosphoSitePlus" id="Q4G008"/>
<dbReference type="PaxDb" id="10116-ENSRNOP00000039129"/>
<dbReference type="GeneID" id="362974"/>
<dbReference type="KEGG" id="rno:362974"/>
<dbReference type="AGR" id="RGD:1304694"/>
<dbReference type="CTD" id="23313"/>
<dbReference type="RGD" id="1304694">
    <property type="gene designation" value="RGD1304694"/>
</dbReference>
<dbReference type="VEuPathDB" id="HostDB:ENSRNOG00000031269"/>
<dbReference type="eggNOG" id="KOG2465">
    <property type="taxonomic scope" value="Eukaryota"/>
</dbReference>
<dbReference type="HOGENOM" id="CLU_010018_1_0_1"/>
<dbReference type="InParanoid" id="Q4G008"/>
<dbReference type="OrthoDB" id="36977at9989"/>
<dbReference type="PhylomeDB" id="Q4G008"/>
<dbReference type="PRO" id="PR:Q4G008"/>
<dbReference type="Proteomes" id="UP000002494">
    <property type="component" value="Chromosome 7"/>
</dbReference>
<dbReference type="Bgee" id="ENSRNOG00000031269">
    <property type="expression patterns" value="Expressed in duodenum and 19 other cell types or tissues"/>
</dbReference>
<dbReference type="InterPro" id="IPR019141">
    <property type="entry name" value="DUF2045"/>
</dbReference>
<dbReference type="PANTHER" id="PTHR21477:SF13">
    <property type="entry name" value="KIAA0930"/>
    <property type="match status" value="1"/>
</dbReference>
<dbReference type="PANTHER" id="PTHR21477">
    <property type="entry name" value="ZGC:172139"/>
    <property type="match status" value="1"/>
</dbReference>
<dbReference type="Pfam" id="PF09741">
    <property type="entry name" value="DUF2045"/>
    <property type="match status" value="1"/>
</dbReference>
<accession>Q4G008</accession>
<sequence>MLRAIAEERGRLSLRREVCGLGCFKDDRIVFWTWMFSTYFMEKLAPRQDDMLFYVRRKRAYTGSESTADGRKAEAEPEVEVEVYRRDSKKLPGLGDPDIDWEESVCLNLILQKLDYMVTCAVCTRADGGDIHIHRKKSQQVFASPSKHPMDSKGEESKMSYPNIFFMIDSFEEVFSDMTVGEGEMVCVELVASDKTNMFQGVIFQGSIRYEALKKVYDNRVSVAARMAQKMSFGFYKYNNMEFVRMKGPQGKGHAEMAVSRVSTGDTSPYGTEDSSPASPMHERVTSFSTPPTPERNNRPAFFSPSLKRKVPRNRIAEMKKSHSANDSEEFFREDDGGADLHNATNLRSRSLSGTGRSLVGSWLKLSRADGNFLLYAHLTYVTLPLHRILTDILEVRQKPILMT</sequence>
<proteinExistence type="evidence at protein level"/>
<organism>
    <name type="scientific">Rattus norvegicus</name>
    <name type="common">Rat</name>
    <dbReference type="NCBI Taxonomy" id="10116"/>
    <lineage>
        <taxon>Eukaryota</taxon>
        <taxon>Metazoa</taxon>
        <taxon>Chordata</taxon>
        <taxon>Craniata</taxon>
        <taxon>Vertebrata</taxon>
        <taxon>Euteleostomi</taxon>
        <taxon>Mammalia</taxon>
        <taxon>Eutheria</taxon>
        <taxon>Euarchontoglires</taxon>
        <taxon>Glires</taxon>
        <taxon>Rodentia</taxon>
        <taxon>Myomorpha</taxon>
        <taxon>Muroidea</taxon>
        <taxon>Muridae</taxon>
        <taxon>Murinae</taxon>
        <taxon>Rattus</taxon>
    </lineage>
</organism>
<protein>
    <recommendedName>
        <fullName>Uncharacterized protein KIAA0930 homolog</fullName>
    </recommendedName>
</protein>
<evidence type="ECO:0000250" key="1">
    <source>
        <dbReference type="UniProtKB" id="Q3UE31"/>
    </source>
</evidence>
<evidence type="ECO:0000250" key="2">
    <source>
        <dbReference type="UniProtKB" id="Q6ICG6"/>
    </source>
</evidence>
<evidence type="ECO:0000256" key="3">
    <source>
        <dbReference type="SAM" id="MobiDB-lite"/>
    </source>
</evidence>
<evidence type="ECO:0007744" key="4">
    <source>
    </source>
</evidence>
<keyword id="KW-0597">Phosphoprotein</keyword>
<keyword id="KW-1185">Reference proteome</keyword>
<name>K0930_RAT</name>
<feature type="chain" id="PRO_0000255940" description="Uncharacterized protein KIAA0930 homolog">
    <location>
        <begin position="1"/>
        <end position="404"/>
    </location>
</feature>
<feature type="region of interest" description="Disordered" evidence="3">
    <location>
        <begin position="262"/>
        <end position="307"/>
    </location>
</feature>
<feature type="region of interest" description="Disordered" evidence="3">
    <location>
        <begin position="320"/>
        <end position="340"/>
    </location>
</feature>
<feature type="compositionally biased region" description="Polar residues" evidence="3">
    <location>
        <begin position="262"/>
        <end position="278"/>
    </location>
</feature>
<feature type="compositionally biased region" description="Basic and acidic residues" evidence="3">
    <location>
        <begin position="320"/>
        <end position="336"/>
    </location>
</feature>
<feature type="modified residue" description="Phosphoserine" evidence="2">
    <location>
        <position position="268"/>
    </location>
</feature>
<feature type="modified residue" description="Phosphoserine" evidence="1">
    <location>
        <position position="276"/>
    </location>
</feature>
<feature type="modified residue" description="Phosphoserine" evidence="2">
    <location>
        <position position="279"/>
    </location>
</feature>
<feature type="modified residue" description="Phosphothreonine" evidence="2">
    <location>
        <position position="290"/>
    </location>
</feature>
<feature type="modified residue" description="Phosphothreonine" evidence="4">
    <location>
        <position position="293"/>
    </location>
</feature>
<feature type="modified residue" description="Phosphoserine" evidence="4">
    <location>
        <position position="304"/>
    </location>
</feature>
<feature type="modified residue" description="Phosphoserine" evidence="2">
    <location>
        <position position="306"/>
    </location>
</feature>
<feature type="modified residue" description="Phosphoserine" evidence="2">
    <location>
        <position position="324"/>
    </location>
</feature>
<feature type="modified residue" description="Phosphoserine" evidence="4">
    <location>
        <position position="358"/>
    </location>
</feature>
<feature type="modified residue" description="Phosphoserine" evidence="4">
    <location>
        <position position="362"/>
    </location>
</feature>